<name>GLUC_ANAPL</name>
<protein>
    <recommendedName>
        <fullName>Glucagon</fullName>
    </recommendedName>
</protein>
<reference key="1">
    <citation type="journal article" date="1972" name="FEBS Lett.">
        <title>Crystallization and amino acid sequence of duck glucagon.</title>
        <authorList>
            <person name="Sundby F."/>
            <person name="Frandsen E.K."/>
            <person name="Thomsen J."/>
            <person name="Kristiansen K."/>
            <person name="Brunfeldt K."/>
        </authorList>
    </citation>
    <scope>PROTEIN SEQUENCE</scope>
    <scope>CRYSTALLIZATION</scope>
</reference>
<comment type="function">
    <text>Glucagon plays a key role in glucose metabolism and homeostasis. Regulates blood glucose by increasing gluconeogenesis and decreasing glycolysis.</text>
</comment>
<comment type="subcellular location">
    <subcellularLocation>
        <location>Secreted</location>
    </subcellularLocation>
</comment>
<comment type="induction">
    <text>Produced in the A cells of the islets of Langerhans in response to a drop in blood sugar concentration.</text>
</comment>
<comment type="similarity">
    <text evidence="1">Belongs to the glucagon family.</text>
</comment>
<keyword id="KW-0903">Direct protein sequencing</keyword>
<keyword id="KW-0372">Hormone</keyword>
<keyword id="KW-0964">Secreted</keyword>
<gene>
    <name type="primary">GCG</name>
</gene>
<proteinExistence type="evidence at protein level"/>
<accession>P68952</accession>
<accession>P01276</accession>
<feature type="peptide" id="PRO_0000043922" description="Glucagon">
    <location>
        <begin position="1"/>
        <end position="29"/>
    </location>
</feature>
<organism>
    <name type="scientific">Anas platyrhynchos</name>
    <name type="common">Mallard</name>
    <name type="synonym">Anas boschas</name>
    <dbReference type="NCBI Taxonomy" id="8839"/>
    <lineage>
        <taxon>Eukaryota</taxon>
        <taxon>Metazoa</taxon>
        <taxon>Chordata</taxon>
        <taxon>Craniata</taxon>
        <taxon>Vertebrata</taxon>
        <taxon>Euteleostomi</taxon>
        <taxon>Archelosauria</taxon>
        <taxon>Archosauria</taxon>
        <taxon>Dinosauria</taxon>
        <taxon>Saurischia</taxon>
        <taxon>Theropoda</taxon>
        <taxon>Coelurosauria</taxon>
        <taxon>Aves</taxon>
        <taxon>Neognathae</taxon>
        <taxon>Galloanserae</taxon>
        <taxon>Anseriformes</taxon>
        <taxon>Anatidae</taxon>
        <taxon>Anatinae</taxon>
        <taxon>Anas</taxon>
    </lineage>
</organism>
<dbReference type="PIR" id="A01542">
    <property type="entry name" value="GCDK"/>
</dbReference>
<dbReference type="SMR" id="P68952"/>
<dbReference type="Proteomes" id="UP000694400">
    <property type="component" value="Unplaced"/>
</dbReference>
<dbReference type="GO" id="GO:0005576">
    <property type="term" value="C:extracellular region"/>
    <property type="evidence" value="ECO:0007669"/>
    <property type="project" value="UniProtKB-SubCell"/>
</dbReference>
<dbReference type="GO" id="GO:0005179">
    <property type="term" value="F:hormone activity"/>
    <property type="evidence" value="ECO:0007669"/>
    <property type="project" value="UniProtKB-KW"/>
</dbReference>
<dbReference type="Gene3D" id="6.10.250.590">
    <property type="match status" value="1"/>
</dbReference>
<dbReference type="InterPro" id="IPR015550">
    <property type="entry name" value="Glucagon"/>
</dbReference>
<dbReference type="InterPro" id="IPR000532">
    <property type="entry name" value="Glucagon_GIP_secretin_VIP"/>
</dbReference>
<dbReference type="PANTHER" id="PTHR11418">
    <property type="entry name" value="GLUCAGON"/>
    <property type="match status" value="1"/>
</dbReference>
<dbReference type="PANTHER" id="PTHR11418:SF0">
    <property type="entry name" value="PRO-GLUCAGON"/>
    <property type="match status" value="1"/>
</dbReference>
<dbReference type="Pfam" id="PF00123">
    <property type="entry name" value="Hormone_2"/>
    <property type="match status" value="1"/>
</dbReference>
<dbReference type="PRINTS" id="PR00275">
    <property type="entry name" value="GLUCAGON"/>
</dbReference>
<dbReference type="SMART" id="SM00070">
    <property type="entry name" value="GLUCA"/>
    <property type="match status" value="1"/>
</dbReference>
<dbReference type="PROSITE" id="PS00260">
    <property type="entry name" value="GLUCAGON"/>
    <property type="match status" value="1"/>
</dbReference>
<evidence type="ECO:0000305" key="1"/>
<sequence>HSQGTFTSDYSKYLDTRRAQDFVQWLMST</sequence>